<dbReference type="EC" id="4.6.1.12" evidence="1"/>
<dbReference type="EMBL" id="CP000667">
    <property type="protein sequence ID" value="ABP56688.1"/>
    <property type="molecule type" value="Genomic_DNA"/>
</dbReference>
<dbReference type="RefSeq" id="WP_012015452.1">
    <property type="nucleotide sequence ID" value="NC_009380.1"/>
</dbReference>
<dbReference type="SMR" id="A4XCN1"/>
<dbReference type="STRING" id="369723.Strop_4260"/>
<dbReference type="KEGG" id="stp:Strop_4260"/>
<dbReference type="PATRIC" id="fig|369723.5.peg.4405"/>
<dbReference type="eggNOG" id="COG0245">
    <property type="taxonomic scope" value="Bacteria"/>
</dbReference>
<dbReference type="HOGENOM" id="CLU_084630_1_0_11"/>
<dbReference type="UniPathway" id="UPA00056">
    <property type="reaction ID" value="UER00095"/>
</dbReference>
<dbReference type="Proteomes" id="UP000000235">
    <property type="component" value="Chromosome"/>
</dbReference>
<dbReference type="GO" id="GO:0008685">
    <property type="term" value="F:2-C-methyl-D-erythritol 2,4-cyclodiphosphate synthase activity"/>
    <property type="evidence" value="ECO:0007669"/>
    <property type="project" value="UniProtKB-UniRule"/>
</dbReference>
<dbReference type="GO" id="GO:0046872">
    <property type="term" value="F:metal ion binding"/>
    <property type="evidence" value="ECO:0007669"/>
    <property type="project" value="UniProtKB-KW"/>
</dbReference>
<dbReference type="GO" id="GO:0019288">
    <property type="term" value="P:isopentenyl diphosphate biosynthetic process, methylerythritol 4-phosphate pathway"/>
    <property type="evidence" value="ECO:0007669"/>
    <property type="project" value="UniProtKB-UniRule"/>
</dbReference>
<dbReference type="GO" id="GO:0016114">
    <property type="term" value="P:terpenoid biosynthetic process"/>
    <property type="evidence" value="ECO:0007669"/>
    <property type="project" value="InterPro"/>
</dbReference>
<dbReference type="CDD" id="cd00554">
    <property type="entry name" value="MECDP_synthase"/>
    <property type="match status" value="1"/>
</dbReference>
<dbReference type="FunFam" id="3.30.1330.50:FF:000003">
    <property type="entry name" value="2-C-methyl-D-erythritol 2,4-cyclodiphosphate synthase"/>
    <property type="match status" value="1"/>
</dbReference>
<dbReference type="Gene3D" id="3.30.1330.50">
    <property type="entry name" value="2-C-methyl-D-erythritol 2,4-cyclodiphosphate synthase"/>
    <property type="match status" value="1"/>
</dbReference>
<dbReference type="HAMAP" id="MF_00107">
    <property type="entry name" value="IspF"/>
    <property type="match status" value="1"/>
</dbReference>
<dbReference type="InterPro" id="IPR003526">
    <property type="entry name" value="MECDP_synthase"/>
</dbReference>
<dbReference type="InterPro" id="IPR020555">
    <property type="entry name" value="MECDP_synthase_CS"/>
</dbReference>
<dbReference type="InterPro" id="IPR036571">
    <property type="entry name" value="MECDP_synthase_sf"/>
</dbReference>
<dbReference type="NCBIfam" id="TIGR00151">
    <property type="entry name" value="ispF"/>
    <property type="match status" value="1"/>
</dbReference>
<dbReference type="PANTHER" id="PTHR43181">
    <property type="entry name" value="2-C-METHYL-D-ERYTHRITOL 2,4-CYCLODIPHOSPHATE SYNTHASE, CHLOROPLASTIC"/>
    <property type="match status" value="1"/>
</dbReference>
<dbReference type="PANTHER" id="PTHR43181:SF1">
    <property type="entry name" value="2-C-METHYL-D-ERYTHRITOL 2,4-CYCLODIPHOSPHATE SYNTHASE, CHLOROPLASTIC"/>
    <property type="match status" value="1"/>
</dbReference>
<dbReference type="Pfam" id="PF02542">
    <property type="entry name" value="YgbB"/>
    <property type="match status" value="1"/>
</dbReference>
<dbReference type="SUPFAM" id="SSF69765">
    <property type="entry name" value="IpsF-like"/>
    <property type="match status" value="1"/>
</dbReference>
<dbReference type="PROSITE" id="PS01350">
    <property type="entry name" value="ISPF"/>
    <property type="match status" value="1"/>
</dbReference>
<comment type="function">
    <text evidence="1">Involved in the biosynthesis of isopentenyl diphosphate (IPP) and dimethylallyl diphosphate (DMAPP), two major building blocks of isoprenoid compounds. Catalyzes the conversion of 4-diphosphocytidyl-2-C-methyl-D-erythritol 2-phosphate (CDP-ME2P) to 2-C-methyl-D-erythritol 2,4-cyclodiphosphate (ME-CPP) with a corresponding release of cytidine 5-monophosphate (CMP).</text>
</comment>
<comment type="catalytic activity">
    <reaction evidence="1">
        <text>4-CDP-2-C-methyl-D-erythritol 2-phosphate = 2-C-methyl-D-erythritol 2,4-cyclic diphosphate + CMP</text>
        <dbReference type="Rhea" id="RHEA:23864"/>
        <dbReference type="ChEBI" id="CHEBI:57919"/>
        <dbReference type="ChEBI" id="CHEBI:58483"/>
        <dbReference type="ChEBI" id="CHEBI:60377"/>
        <dbReference type="EC" id="4.6.1.12"/>
    </reaction>
</comment>
<comment type="cofactor">
    <cofactor evidence="1">
        <name>a divalent metal cation</name>
        <dbReference type="ChEBI" id="CHEBI:60240"/>
    </cofactor>
    <text evidence="1">Binds 1 divalent metal cation per subunit.</text>
</comment>
<comment type="pathway">
    <text evidence="1">Isoprenoid biosynthesis; isopentenyl diphosphate biosynthesis via DXP pathway; isopentenyl diphosphate from 1-deoxy-D-xylulose 5-phosphate: step 4/6.</text>
</comment>
<comment type="subunit">
    <text evidence="1">Homotrimer.</text>
</comment>
<comment type="similarity">
    <text evidence="1">Belongs to the IspF family.</text>
</comment>
<proteinExistence type="inferred from homology"/>
<gene>
    <name evidence="1" type="primary">ispF</name>
    <name type="ordered locus">Strop_4260</name>
</gene>
<feature type="chain" id="PRO_1000202888" description="2-C-methyl-D-erythritol 2,4-cyclodiphosphate synthase">
    <location>
        <begin position="1"/>
        <end position="161"/>
    </location>
</feature>
<feature type="binding site" evidence="1">
    <location>
        <begin position="12"/>
        <end position="14"/>
    </location>
    <ligand>
        <name>4-CDP-2-C-methyl-D-erythritol 2-phosphate</name>
        <dbReference type="ChEBI" id="CHEBI:57919"/>
    </ligand>
</feature>
<feature type="binding site" evidence="1">
    <location>
        <position position="12"/>
    </location>
    <ligand>
        <name>a divalent metal cation</name>
        <dbReference type="ChEBI" id="CHEBI:60240"/>
    </ligand>
</feature>
<feature type="binding site" evidence="1">
    <location>
        <position position="14"/>
    </location>
    <ligand>
        <name>a divalent metal cation</name>
        <dbReference type="ChEBI" id="CHEBI:60240"/>
    </ligand>
</feature>
<feature type="binding site" evidence="1">
    <location>
        <begin position="38"/>
        <end position="39"/>
    </location>
    <ligand>
        <name>4-CDP-2-C-methyl-D-erythritol 2-phosphate</name>
        <dbReference type="ChEBI" id="CHEBI:57919"/>
    </ligand>
</feature>
<feature type="binding site" evidence="1">
    <location>
        <position position="46"/>
    </location>
    <ligand>
        <name>a divalent metal cation</name>
        <dbReference type="ChEBI" id="CHEBI:60240"/>
    </ligand>
</feature>
<feature type="binding site" evidence="1">
    <location>
        <begin position="60"/>
        <end position="62"/>
    </location>
    <ligand>
        <name>4-CDP-2-C-methyl-D-erythritol 2-phosphate</name>
        <dbReference type="ChEBI" id="CHEBI:57919"/>
    </ligand>
</feature>
<feature type="binding site" evidence="1">
    <location>
        <position position="140"/>
    </location>
    <ligand>
        <name>4-CDP-2-C-methyl-D-erythritol 2-phosphate</name>
        <dbReference type="ChEBI" id="CHEBI:57919"/>
    </ligand>
</feature>
<feature type="binding site" evidence="1">
    <location>
        <position position="143"/>
    </location>
    <ligand>
        <name>4-CDP-2-C-methyl-D-erythritol 2-phosphate</name>
        <dbReference type="ChEBI" id="CHEBI:57919"/>
    </ligand>
</feature>
<feature type="site" description="Transition state stabilizer" evidence="1">
    <location>
        <position position="38"/>
    </location>
</feature>
<feature type="site" description="Transition state stabilizer" evidence="1">
    <location>
        <position position="134"/>
    </location>
</feature>
<reference key="1">
    <citation type="journal article" date="2007" name="Proc. Natl. Acad. Sci. U.S.A.">
        <title>Genome sequencing reveals complex secondary metabolome in the marine actinomycete Salinispora tropica.</title>
        <authorList>
            <person name="Udwary D.W."/>
            <person name="Zeigler L."/>
            <person name="Asolkar R.N."/>
            <person name="Singan V."/>
            <person name="Lapidus A."/>
            <person name="Fenical W."/>
            <person name="Jensen P.R."/>
            <person name="Moore B.S."/>
        </authorList>
    </citation>
    <scope>NUCLEOTIDE SEQUENCE [LARGE SCALE GENOMIC DNA]</scope>
    <source>
        <strain>ATCC BAA-916 / DSM 44818 / JCM 13857 / NBRC 105044 / CNB-440</strain>
    </source>
</reference>
<name>ISPF_SALTO</name>
<protein>
    <recommendedName>
        <fullName evidence="1">2-C-methyl-D-erythritol 2,4-cyclodiphosphate synthase</fullName>
        <shortName evidence="1">MECDP-synthase</shortName>
        <shortName evidence="1">MECPP-synthase</shortName>
        <shortName evidence="1">MECPS</shortName>
        <ecNumber evidence="1">4.6.1.12</ecNumber>
    </recommendedName>
</protein>
<organism>
    <name type="scientific">Salinispora tropica (strain ATCC BAA-916 / DSM 44818 / JCM 13857 / NBRC 105044 / CNB-440)</name>
    <dbReference type="NCBI Taxonomy" id="369723"/>
    <lineage>
        <taxon>Bacteria</taxon>
        <taxon>Bacillati</taxon>
        <taxon>Actinomycetota</taxon>
        <taxon>Actinomycetes</taxon>
        <taxon>Micromonosporales</taxon>
        <taxon>Micromonosporaceae</taxon>
        <taxon>Salinispora</taxon>
    </lineage>
</organism>
<sequence>MVIVPRVAIGVDMHAFESGRPCWVAGLHWPGQDGLAGHSDADVAAHAACNALLSAAELGDLGANFGVGQPEWSGASGVALLSESARRVRTAGYTIGNVSVQVIGNRPKIGPRRAEAQQVLSAAVGAPVSVSAATTDGLGFPGRDEGLTGIAVALVYAAPAA</sequence>
<accession>A4XCN1</accession>
<evidence type="ECO:0000255" key="1">
    <source>
        <dbReference type="HAMAP-Rule" id="MF_00107"/>
    </source>
</evidence>
<keyword id="KW-0414">Isoprene biosynthesis</keyword>
<keyword id="KW-0456">Lyase</keyword>
<keyword id="KW-0479">Metal-binding</keyword>
<keyword id="KW-1185">Reference proteome</keyword>